<sequence>MTRIKRGYIARKRRTKIRLFTSSFRGAHSRLTRTITQQKIKALVSAHRDRDRKKRDFRGLWISRINAVIRGNIKVYYIYSNLVYSLYTGQLLLNRKIVAQIAILKQNCLFMIANDIIKTKNPLRLYSGKV</sequence>
<dbReference type="EMBL" id="X07676">
    <property type="protein sequence ID" value="CAB56501.1"/>
    <property type="molecule type" value="Genomic_DNA"/>
</dbReference>
<dbReference type="EMBL" id="DQ317523">
    <property type="protein sequence ID" value="ABC25147.1"/>
    <property type="molecule type" value="Genomic_DNA"/>
</dbReference>
<dbReference type="PIR" id="S05720">
    <property type="entry name" value="S05720"/>
</dbReference>
<dbReference type="RefSeq" id="YP_538787.1">
    <property type="nucleotide sequence ID" value="NC_007942.1"/>
</dbReference>
<dbReference type="SMR" id="P19948"/>
<dbReference type="FunCoup" id="P19948">
    <property type="interactions" value="81"/>
</dbReference>
<dbReference type="STRING" id="3847.P19948"/>
<dbReference type="GeneID" id="3989321"/>
<dbReference type="KEGG" id="gmx:3989321"/>
<dbReference type="InParanoid" id="P19948"/>
<dbReference type="Proteomes" id="UP000008827">
    <property type="component" value="Chloroplast"/>
</dbReference>
<dbReference type="GO" id="GO:0009507">
    <property type="term" value="C:chloroplast"/>
    <property type="evidence" value="ECO:0007669"/>
    <property type="project" value="UniProtKB-SubCell"/>
</dbReference>
<dbReference type="GO" id="GO:1990904">
    <property type="term" value="C:ribonucleoprotein complex"/>
    <property type="evidence" value="ECO:0007669"/>
    <property type="project" value="UniProtKB-KW"/>
</dbReference>
<dbReference type="GO" id="GO:0005840">
    <property type="term" value="C:ribosome"/>
    <property type="evidence" value="ECO:0007669"/>
    <property type="project" value="UniProtKB-KW"/>
</dbReference>
<dbReference type="GO" id="GO:0019843">
    <property type="term" value="F:rRNA binding"/>
    <property type="evidence" value="ECO:0007669"/>
    <property type="project" value="UniProtKB-UniRule"/>
</dbReference>
<dbReference type="GO" id="GO:0003735">
    <property type="term" value="F:structural constituent of ribosome"/>
    <property type="evidence" value="ECO:0000318"/>
    <property type="project" value="GO_Central"/>
</dbReference>
<dbReference type="GO" id="GO:0000027">
    <property type="term" value="P:ribosomal large subunit assembly"/>
    <property type="evidence" value="ECO:0007669"/>
    <property type="project" value="UniProtKB-UniRule"/>
</dbReference>
<dbReference type="GO" id="GO:0006412">
    <property type="term" value="P:translation"/>
    <property type="evidence" value="ECO:0007669"/>
    <property type="project" value="InterPro"/>
</dbReference>
<dbReference type="CDD" id="cd07026">
    <property type="entry name" value="Ribosomal_L20"/>
    <property type="match status" value="1"/>
</dbReference>
<dbReference type="FunFam" id="1.10.1900.20:FF:000001">
    <property type="entry name" value="50S ribosomal protein L20"/>
    <property type="match status" value="1"/>
</dbReference>
<dbReference type="Gene3D" id="6.10.160.10">
    <property type="match status" value="1"/>
</dbReference>
<dbReference type="Gene3D" id="1.10.1900.20">
    <property type="entry name" value="Ribosomal protein L20"/>
    <property type="match status" value="1"/>
</dbReference>
<dbReference type="HAMAP" id="MF_00382">
    <property type="entry name" value="Ribosomal_bL20"/>
    <property type="match status" value="1"/>
</dbReference>
<dbReference type="InterPro" id="IPR005813">
    <property type="entry name" value="Ribosomal_bL20"/>
</dbReference>
<dbReference type="InterPro" id="IPR049946">
    <property type="entry name" value="RIBOSOMAL_L20_CS"/>
</dbReference>
<dbReference type="InterPro" id="IPR035566">
    <property type="entry name" value="Ribosomal_protein_bL20_C"/>
</dbReference>
<dbReference type="NCBIfam" id="TIGR01032">
    <property type="entry name" value="rplT_bact"/>
    <property type="match status" value="1"/>
</dbReference>
<dbReference type="PANTHER" id="PTHR10986">
    <property type="entry name" value="39S RIBOSOMAL PROTEIN L20"/>
    <property type="match status" value="1"/>
</dbReference>
<dbReference type="Pfam" id="PF00453">
    <property type="entry name" value="Ribosomal_L20"/>
    <property type="match status" value="1"/>
</dbReference>
<dbReference type="PRINTS" id="PR00062">
    <property type="entry name" value="RIBOSOMALL20"/>
</dbReference>
<dbReference type="SUPFAM" id="SSF74731">
    <property type="entry name" value="Ribosomal protein L20"/>
    <property type="match status" value="1"/>
</dbReference>
<dbReference type="PROSITE" id="PS00937">
    <property type="entry name" value="RIBOSOMAL_L20"/>
    <property type="match status" value="1"/>
</dbReference>
<gene>
    <name type="primary">rpl20</name>
</gene>
<comment type="function">
    <text evidence="1">Binds directly to 23S ribosomal RNA and is necessary for the in vitro assembly process of the 50S ribosomal subunit. It is not involved in the protein synthesizing functions of that subunit (By similarity).</text>
</comment>
<comment type="subcellular location">
    <subcellularLocation>
        <location>Plastid</location>
        <location>Chloroplast</location>
    </subcellularLocation>
</comment>
<comment type="similarity">
    <text evidence="2">Belongs to the bacterial ribosomal protein bL20 family.</text>
</comment>
<reference key="1">
    <citation type="submission" date="1988-05" db="EMBL/GenBank/DDBJ databases">
        <title>Analysis of the 5' rps12 and 3' rps7 regions of soybean chloroplast DNA including parts of the genes rpl20 and ndhB.</title>
        <authorList>
            <person name="von Allmen J.-M."/>
            <person name="Stutz E."/>
        </authorList>
    </citation>
    <scope>NUCLEOTIDE SEQUENCE [GENOMIC DNA]</scope>
    <source>
        <strain>cv. Maple Arrow</strain>
    </source>
</reference>
<reference key="2">
    <citation type="journal article" date="2005" name="Plant Mol. Biol.">
        <title>Complete chloroplast genome sequence of Glycine max and comparative analyses with other legume genomes.</title>
        <authorList>
            <person name="Saski C."/>
            <person name="Lee S.-B."/>
            <person name="Daniell H."/>
            <person name="Wood T.C."/>
            <person name="Tomkins J."/>
            <person name="Kim H.-G."/>
            <person name="Jansen R.K."/>
        </authorList>
    </citation>
    <scope>NUCLEOTIDE SEQUENCE [LARGE SCALE GENOMIC DNA]</scope>
    <source>
        <strain>cv. PI 437654</strain>
    </source>
</reference>
<proteinExistence type="inferred from homology"/>
<feature type="chain" id="PRO_0000177311" description="Large ribosomal subunit protein bL20c">
    <location>
        <begin position="1"/>
        <end position="130"/>
    </location>
</feature>
<feature type="sequence conflict" description="In Ref. 1; CAB56501." evidence="2" ref="1">
    <original>T</original>
    <variation>A</variation>
    <location>
        <position position="21"/>
    </location>
</feature>
<feature type="sequence conflict" description="In Ref. 1; CAB56501." evidence="2" ref="1">
    <original>L</original>
    <variation>W</variation>
    <location>
        <position position="91"/>
    </location>
</feature>
<name>RK20_SOYBN</name>
<keyword id="KW-0150">Chloroplast</keyword>
<keyword id="KW-0934">Plastid</keyword>
<keyword id="KW-1185">Reference proteome</keyword>
<keyword id="KW-0687">Ribonucleoprotein</keyword>
<keyword id="KW-0689">Ribosomal protein</keyword>
<keyword id="KW-0694">RNA-binding</keyword>
<keyword id="KW-0699">rRNA-binding</keyword>
<organism>
    <name type="scientific">Glycine max</name>
    <name type="common">Soybean</name>
    <name type="synonym">Glycine hispida</name>
    <dbReference type="NCBI Taxonomy" id="3847"/>
    <lineage>
        <taxon>Eukaryota</taxon>
        <taxon>Viridiplantae</taxon>
        <taxon>Streptophyta</taxon>
        <taxon>Embryophyta</taxon>
        <taxon>Tracheophyta</taxon>
        <taxon>Spermatophyta</taxon>
        <taxon>Magnoliopsida</taxon>
        <taxon>eudicotyledons</taxon>
        <taxon>Gunneridae</taxon>
        <taxon>Pentapetalae</taxon>
        <taxon>rosids</taxon>
        <taxon>fabids</taxon>
        <taxon>Fabales</taxon>
        <taxon>Fabaceae</taxon>
        <taxon>Papilionoideae</taxon>
        <taxon>50 kb inversion clade</taxon>
        <taxon>NPAAA clade</taxon>
        <taxon>indigoferoid/millettioid clade</taxon>
        <taxon>Phaseoleae</taxon>
        <taxon>Glycine</taxon>
        <taxon>Glycine subgen. Soja</taxon>
    </lineage>
</organism>
<geneLocation type="chloroplast"/>
<accession>P19948</accession>
<accession>Q2PMR1</accession>
<accession>Q7YNW5</accession>
<evidence type="ECO:0000250" key="1"/>
<evidence type="ECO:0000305" key="2"/>
<protein>
    <recommendedName>
        <fullName evidence="2">Large ribosomal subunit protein bL20c</fullName>
    </recommendedName>
    <alternativeName>
        <fullName>50S ribosomal protein L20, chloroplastic</fullName>
    </alternativeName>
</protein>